<comment type="function">
    <text evidence="1">Catalyzes the methyl esterification of L-isoaspartyl residues in peptides and proteins that result from spontaneous decomposition of normal L-aspartyl and L-asparaginyl residues. It plays a role in the repair and/or degradation of damaged proteins.</text>
</comment>
<comment type="catalytic activity">
    <reaction evidence="1">
        <text>[protein]-L-isoaspartate + S-adenosyl-L-methionine = [protein]-L-isoaspartate alpha-methyl ester + S-adenosyl-L-homocysteine</text>
        <dbReference type="Rhea" id="RHEA:12705"/>
        <dbReference type="Rhea" id="RHEA-COMP:12143"/>
        <dbReference type="Rhea" id="RHEA-COMP:12144"/>
        <dbReference type="ChEBI" id="CHEBI:57856"/>
        <dbReference type="ChEBI" id="CHEBI:59789"/>
        <dbReference type="ChEBI" id="CHEBI:90596"/>
        <dbReference type="ChEBI" id="CHEBI:90598"/>
        <dbReference type="EC" id="2.1.1.77"/>
    </reaction>
</comment>
<comment type="subcellular location">
    <subcellularLocation>
        <location evidence="1">Cytoplasm</location>
    </subcellularLocation>
</comment>
<comment type="similarity">
    <text evidence="1">Belongs to the methyltransferase superfamily. L-isoaspartyl/D-aspartyl protein methyltransferase family.</text>
</comment>
<gene>
    <name evidence="1" type="primary">pcm</name>
    <name type="ordered locus">ECED1_3199</name>
</gene>
<organism>
    <name type="scientific">Escherichia coli O81 (strain ED1a)</name>
    <dbReference type="NCBI Taxonomy" id="585397"/>
    <lineage>
        <taxon>Bacteria</taxon>
        <taxon>Pseudomonadati</taxon>
        <taxon>Pseudomonadota</taxon>
        <taxon>Gammaproteobacteria</taxon>
        <taxon>Enterobacterales</taxon>
        <taxon>Enterobacteriaceae</taxon>
        <taxon>Escherichia</taxon>
    </lineage>
</organism>
<feature type="chain" id="PRO_1000192396" description="Protein-L-isoaspartate O-methyltransferase">
    <location>
        <begin position="1"/>
        <end position="208"/>
    </location>
</feature>
<feature type="active site" evidence="1">
    <location>
        <position position="59"/>
    </location>
</feature>
<accession>B7MZ44</accession>
<dbReference type="EC" id="2.1.1.77" evidence="1"/>
<dbReference type="EMBL" id="CU928162">
    <property type="protein sequence ID" value="CAR09361.2"/>
    <property type="molecule type" value="Genomic_DNA"/>
</dbReference>
<dbReference type="RefSeq" id="WP_000254701.1">
    <property type="nucleotide sequence ID" value="NC_011745.1"/>
</dbReference>
<dbReference type="SMR" id="B7MZ44"/>
<dbReference type="KEGG" id="ecq:ECED1_3199"/>
<dbReference type="HOGENOM" id="CLU_055432_2_0_6"/>
<dbReference type="Proteomes" id="UP000000748">
    <property type="component" value="Chromosome"/>
</dbReference>
<dbReference type="GO" id="GO:0005737">
    <property type="term" value="C:cytoplasm"/>
    <property type="evidence" value="ECO:0007669"/>
    <property type="project" value="UniProtKB-SubCell"/>
</dbReference>
<dbReference type="GO" id="GO:0004719">
    <property type="term" value="F:protein-L-isoaspartate (D-aspartate) O-methyltransferase activity"/>
    <property type="evidence" value="ECO:0007669"/>
    <property type="project" value="UniProtKB-UniRule"/>
</dbReference>
<dbReference type="GO" id="GO:0032259">
    <property type="term" value="P:methylation"/>
    <property type="evidence" value="ECO:0007669"/>
    <property type="project" value="UniProtKB-KW"/>
</dbReference>
<dbReference type="GO" id="GO:0036211">
    <property type="term" value="P:protein modification process"/>
    <property type="evidence" value="ECO:0007669"/>
    <property type="project" value="UniProtKB-UniRule"/>
</dbReference>
<dbReference type="GO" id="GO:0030091">
    <property type="term" value="P:protein repair"/>
    <property type="evidence" value="ECO:0007669"/>
    <property type="project" value="UniProtKB-UniRule"/>
</dbReference>
<dbReference type="CDD" id="cd02440">
    <property type="entry name" value="AdoMet_MTases"/>
    <property type="match status" value="1"/>
</dbReference>
<dbReference type="FunFam" id="3.40.50.150:FF:000010">
    <property type="entry name" value="Protein-L-isoaspartate O-methyltransferase"/>
    <property type="match status" value="1"/>
</dbReference>
<dbReference type="Gene3D" id="3.40.50.150">
    <property type="entry name" value="Vaccinia Virus protein VP39"/>
    <property type="match status" value="1"/>
</dbReference>
<dbReference type="HAMAP" id="MF_00090">
    <property type="entry name" value="PIMT"/>
    <property type="match status" value="1"/>
</dbReference>
<dbReference type="InterPro" id="IPR000682">
    <property type="entry name" value="PCMT"/>
</dbReference>
<dbReference type="InterPro" id="IPR029063">
    <property type="entry name" value="SAM-dependent_MTases_sf"/>
</dbReference>
<dbReference type="NCBIfam" id="TIGR00080">
    <property type="entry name" value="pimt"/>
    <property type="match status" value="1"/>
</dbReference>
<dbReference type="NCBIfam" id="NF001453">
    <property type="entry name" value="PRK00312.1"/>
    <property type="match status" value="1"/>
</dbReference>
<dbReference type="PANTHER" id="PTHR11579">
    <property type="entry name" value="PROTEIN-L-ISOASPARTATE O-METHYLTRANSFERASE"/>
    <property type="match status" value="1"/>
</dbReference>
<dbReference type="PANTHER" id="PTHR11579:SF0">
    <property type="entry name" value="PROTEIN-L-ISOASPARTATE(D-ASPARTATE) O-METHYLTRANSFERASE"/>
    <property type="match status" value="1"/>
</dbReference>
<dbReference type="Pfam" id="PF01135">
    <property type="entry name" value="PCMT"/>
    <property type="match status" value="1"/>
</dbReference>
<dbReference type="SUPFAM" id="SSF53335">
    <property type="entry name" value="S-adenosyl-L-methionine-dependent methyltransferases"/>
    <property type="match status" value="1"/>
</dbReference>
<dbReference type="PROSITE" id="PS01279">
    <property type="entry name" value="PCMT"/>
    <property type="match status" value="1"/>
</dbReference>
<proteinExistence type="inferred from homology"/>
<protein>
    <recommendedName>
        <fullName evidence="1">Protein-L-isoaspartate O-methyltransferase</fullName>
        <ecNumber evidence="1">2.1.1.77</ecNumber>
    </recommendedName>
    <alternativeName>
        <fullName evidence="1">L-isoaspartyl protein carboxyl methyltransferase</fullName>
    </alternativeName>
    <alternativeName>
        <fullName evidence="1">Protein L-isoaspartyl methyltransferase</fullName>
    </alternativeName>
    <alternativeName>
        <fullName evidence="1">Protein-beta-aspartate methyltransferase</fullName>
        <shortName evidence="1">PIMT</shortName>
    </alternativeName>
</protein>
<evidence type="ECO:0000255" key="1">
    <source>
        <dbReference type="HAMAP-Rule" id="MF_00090"/>
    </source>
</evidence>
<sequence length="208" mass="23243">MVSRRVQALLDQLRAQGIQDELVLNALAAVPREKFVDEAFEQKAWDNIALPIGQGQTISQPYMVARMTELLELTPQSRVLEIGTGSGYQTAILAHLVQHVCSVERIKGLQWQARRRLKNLDLHNVSTRHGDGWQGWQARAPFDAIIVTAAPPEIPTALMTQLDEGGILVLPVGEEHQYLKRVRRRGGEFIIDTVEAVRFVPLVKGELA</sequence>
<keyword id="KW-0963">Cytoplasm</keyword>
<keyword id="KW-0489">Methyltransferase</keyword>
<keyword id="KW-0949">S-adenosyl-L-methionine</keyword>
<keyword id="KW-0808">Transferase</keyword>
<reference key="1">
    <citation type="journal article" date="2009" name="PLoS Genet.">
        <title>Organised genome dynamics in the Escherichia coli species results in highly diverse adaptive paths.</title>
        <authorList>
            <person name="Touchon M."/>
            <person name="Hoede C."/>
            <person name="Tenaillon O."/>
            <person name="Barbe V."/>
            <person name="Baeriswyl S."/>
            <person name="Bidet P."/>
            <person name="Bingen E."/>
            <person name="Bonacorsi S."/>
            <person name="Bouchier C."/>
            <person name="Bouvet O."/>
            <person name="Calteau A."/>
            <person name="Chiapello H."/>
            <person name="Clermont O."/>
            <person name="Cruveiller S."/>
            <person name="Danchin A."/>
            <person name="Diard M."/>
            <person name="Dossat C."/>
            <person name="Karoui M.E."/>
            <person name="Frapy E."/>
            <person name="Garry L."/>
            <person name="Ghigo J.M."/>
            <person name="Gilles A.M."/>
            <person name="Johnson J."/>
            <person name="Le Bouguenec C."/>
            <person name="Lescat M."/>
            <person name="Mangenot S."/>
            <person name="Martinez-Jehanne V."/>
            <person name="Matic I."/>
            <person name="Nassif X."/>
            <person name="Oztas S."/>
            <person name="Petit M.A."/>
            <person name="Pichon C."/>
            <person name="Rouy Z."/>
            <person name="Ruf C.S."/>
            <person name="Schneider D."/>
            <person name="Tourret J."/>
            <person name="Vacherie B."/>
            <person name="Vallenet D."/>
            <person name="Medigue C."/>
            <person name="Rocha E.P.C."/>
            <person name="Denamur E."/>
        </authorList>
    </citation>
    <scope>NUCLEOTIDE SEQUENCE [LARGE SCALE GENOMIC DNA]</scope>
    <source>
        <strain>ED1a</strain>
    </source>
</reference>
<name>PIMT_ECO81</name>